<name>DNLJ_CERS1</name>
<reference key="1">
    <citation type="submission" date="2007-02" db="EMBL/GenBank/DDBJ databases">
        <title>Complete sequence of chromosome 1 of Rhodobacter sphaeroides ATCC 17029.</title>
        <authorList>
            <person name="Copeland A."/>
            <person name="Lucas S."/>
            <person name="Lapidus A."/>
            <person name="Barry K."/>
            <person name="Detter J.C."/>
            <person name="Glavina del Rio T."/>
            <person name="Hammon N."/>
            <person name="Israni S."/>
            <person name="Dalin E."/>
            <person name="Tice H."/>
            <person name="Pitluck S."/>
            <person name="Kiss H."/>
            <person name="Brettin T."/>
            <person name="Bruce D."/>
            <person name="Han C."/>
            <person name="Tapia R."/>
            <person name="Gilna P."/>
            <person name="Schmutz J."/>
            <person name="Larimer F."/>
            <person name="Land M."/>
            <person name="Hauser L."/>
            <person name="Kyrpides N."/>
            <person name="Mikhailova N."/>
            <person name="Richardson P."/>
            <person name="Mackenzie C."/>
            <person name="Choudhary M."/>
            <person name="Donohue T.J."/>
            <person name="Kaplan S."/>
        </authorList>
    </citation>
    <scope>NUCLEOTIDE SEQUENCE [LARGE SCALE GENOMIC DNA]</scope>
    <source>
        <strain>ATCC 17029 / ATH 2.4.9</strain>
    </source>
</reference>
<proteinExistence type="inferred from homology"/>
<comment type="function">
    <text evidence="1">DNA ligase that catalyzes the formation of phosphodiester linkages between 5'-phosphoryl and 3'-hydroxyl groups in double-stranded DNA using NAD as a coenzyme and as the energy source for the reaction. It is essential for DNA replication and repair of damaged DNA.</text>
</comment>
<comment type="catalytic activity">
    <reaction evidence="1">
        <text>NAD(+) + (deoxyribonucleotide)n-3'-hydroxyl + 5'-phospho-(deoxyribonucleotide)m = (deoxyribonucleotide)n+m + AMP + beta-nicotinamide D-nucleotide.</text>
        <dbReference type="EC" id="6.5.1.2"/>
    </reaction>
</comment>
<comment type="cofactor">
    <cofactor evidence="1">
        <name>Mg(2+)</name>
        <dbReference type="ChEBI" id="CHEBI:18420"/>
    </cofactor>
    <cofactor evidence="1">
        <name>Mn(2+)</name>
        <dbReference type="ChEBI" id="CHEBI:29035"/>
    </cofactor>
</comment>
<comment type="similarity">
    <text evidence="1">Belongs to the NAD-dependent DNA ligase family. LigA subfamily.</text>
</comment>
<gene>
    <name evidence="1" type="primary">ligA</name>
    <name type="ordered locus">Rsph17029_1280</name>
</gene>
<keyword id="KW-0227">DNA damage</keyword>
<keyword id="KW-0234">DNA repair</keyword>
<keyword id="KW-0235">DNA replication</keyword>
<keyword id="KW-0436">Ligase</keyword>
<keyword id="KW-0460">Magnesium</keyword>
<keyword id="KW-0464">Manganese</keyword>
<keyword id="KW-0479">Metal-binding</keyword>
<keyword id="KW-0520">NAD</keyword>
<keyword id="KW-0862">Zinc</keyword>
<dbReference type="EC" id="6.5.1.2" evidence="1"/>
<dbReference type="EMBL" id="CP000577">
    <property type="protein sequence ID" value="ABN76390.1"/>
    <property type="molecule type" value="Genomic_DNA"/>
</dbReference>
<dbReference type="RefSeq" id="WP_011840916.1">
    <property type="nucleotide sequence ID" value="NC_009049.1"/>
</dbReference>
<dbReference type="SMR" id="A3PJ74"/>
<dbReference type="KEGG" id="rsh:Rsph17029_1280"/>
<dbReference type="HOGENOM" id="CLU_007764_2_1_5"/>
<dbReference type="GO" id="GO:0005829">
    <property type="term" value="C:cytosol"/>
    <property type="evidence" value="ECO:0007669"/>
    <property type="project" value="TreeGrafter"/>
</dbReference>
<dbReference type="GO" id="GO:0003911">
    <property type="term" value="F:DNA ligase (NAD+) activity"/>
    <property type="evidence" value="ECO:0007669"/>
    <property type="project" value="UniProtKB-UniRule"/>
</dbReference>
<dbReference type="GO" id="GO:0046872">
    <property type="term" value="F:metal ion binding"/>
    <property type="evidence" value="ECO:0007669"/>
    <property type="project" value="UniProtKB-KW"/>
</dbReference>
<dbReference type="GO" id="GO:0006281">
    <property type="term" value="P:DNA repair"/>
    <property type="evidence" value="ECO:0007669"/>
    <property type="project" value="UniProtKB-KW"/>
</dbReference>
<dbReference type="GO" id="GO:0006260">
    <property type="term" value="P:DNA replication"/>
    <property type="evidence" value="ECO:0007669"/>
    <property type="project" value="UniProtKB-KW"/>
</dbReference>
<dbReference type="CDD" id="cd17748">
    <property type="entry name" value="BRCT_DNA_ligase_like"/>
    <property type="match status" value="1"/>
</dbReference>
<dbReference type="CDD" id="cd00114">
    <property type="entry name" value="LIGANc"/>
    <property type="match status" value="1"/>
</dbReference>
<dbReference type="FunFam" id="1.10.150.20:FF:000007">
    <property type="entry name" value="DNA ligase"/>
    <property type="match status" value="1"/>
</dbReference>
<dbReference type="FunFam" id="3.30.470.30:FF:000001">
    <property type="entry name" value="DNA ligase"/>
    <property type="match status" value="1"/>
</dbReference>
<dbReference type="Gene3D" id="6.20.10.30">
    <property type="match status" value="1"/>
</dbReference>
<dbReference type="Gene3D" id="1.10.150.20">
    <property type="entry name" value="5' to 3' exonuclease, C-terminal subdomain"/>
    <property type="match status" value="2"/>
</dbReference>
<dbReference type="Gene3D" id="3.40.50.10190">
    <property type="entry name" value="BRCT domain"/>
    <property type="match status" value="1"/>
</dbReference>
<dbReference type="Gene3D" id="3.30.470.30">
    <property type="entry name" value="DNA ligase/mRNA capping enzyme"/>
    <property type="match status" value="1"/>
</dbReference>
<dbReference type="Gene3D" id="1.10.287.610">
    <property type="entry name" value="Helix hairpin bin"/>
    <property type="match status" value="1"/>
</dbReference>
<dbReference type="Gene3D" id="2.40.50.140">
    <property type="entry name" value="Nucleic acid-binding proteins"/>
    <property type="match status" value="1"/>
</dbReference>
<dbReference type="HAMAP" id="MF_01588">
    <property type="entry name" value="DNA_ligase_A"/>
    <property type="match status" value="1"/>
</dbReference>
<dbReference type="InterPro" id="IPR001357">
    <property type="entry name" value="BRCT_dom"/>
</dbReference>
<dbReference type="InterPro" id="IPR036420">
    <property type="entry name" value="BRCT_dom_sf"/>
</dbReference>
<dbReference type="InterPro" id="IPR041663">
    <property type="entry name" value="DisA/LigA_HHH"/>
</dbReference>
<dbReference type="InterPro" id="IPR001679">
    <property type="entry name" value="DNA_ligase"/>
</dbReference>
<dbReference type="InterPro" id="IPR018239">
    <property type="entry name" value="DNA_ligase_AS"/>
</dbReference>
<dbReference type="InterPro" id="IPR033136">
    <property type="entry name" value="DNA_ligase_CS"/>
</dbReference>
<dbReference type="InterPro" id="IPR013839">
    <property type="entry name" value="DNAligase_adenylation"/>
</dbReference>
<dbReference type="InterPro" id="IPR013840">
    <property type="entry name" value="DNAligase_N"/>
</dbReference>
<dbReference type="InterPro" id="IPR012340">
    <property type="entry name" value="NA-bd_OB-fold"/>
</dbReference>
<dbReference type="InterPro" id="IPR004150">
    <property type="entry name" value="NAD_DNA_ligase_OB"/>
</dbReference>
<dbReference type="InterPro" id="IPR010994">
    <property type="entry name" value="RuvA_2-like"/>
</dbReference>
<dbReference type="InterPro" id="IPR004149">
    <property type="entry name" value="Znf_DNAligase_C4"/>
</dbReference>
<dbReference type="NCBIfam" id="TIGR00575">
    <property type="entry name" value="dnlj"/>
    <property type="match status" value="1"/>
</dbReference>
<dbReference type="NCBIfam" id="NF005932">
    <property type="entry name" value="PRK07956.1"/>
    <property type="match status" value="1"/>
</dbReference>
<dbReference type="PANTHER" id="PTHR23389">
    <property type="entry name" value="CHROMOSOME TRANSMISSION FIDELITY FACTOR 18"/>
    <property type="match status" value="1"/>
</dbReference>
<dbReference type="PANTHER" id="PTHR23389:SF9">
    <property type="entry name" value="DNA LIGASE"/>
    <property type="match status" value="1"/>
</dbReference>
<dbReference type="Pfam" id="PF00533">
    <property type="entry name" value="BRCT"/>
    <property type="match status" value="1"/>
</dbReference>
<dbReference type="Pfam" id="PF01653">
    <property type="entry name" value="DNA_ligase_aden"/>
    <property type="match status" value="1"/>
</dbReference>
<dbReference type="Pfam" id="PF03120">
    <property type="entry name" value="DNA_ligase_OB"/>
    <property type="match status" value="1"/>
</dbReference>
<dbReference type="Pfam" id="PF03119">
    <property type="entry name" value="DNA_ligase_ZBD"/>
    <property type="match status" value="1"/>
</dbReference>
<dbReference type="Pfam" id="PF12826">
    <property type="entry name" value="HHH_2"/>
    <property type="match status" value="1"/>
</dbReference>
<dbReference type="PIRSF" id="PIRSF001604">
    <property type="entry name" value="LigA"/>
    <property type="match status" value="1"/>
</dbReference>
<dbReference type="SMART" id="SM00292">
    <property type="entry name" value="BRCT"/>
    <property type="match status" value="1"/>
</dbReference>
<dbReference type="SMART" id="SM00532">
    <property type="entry name" value="LIGANc"/>
    <property type="match status" value="1"/>
</dbReference>
<dbReference type="SUPFAM" id="SSF52113">
    <property type="entry name" value="BRCT domain"/>
    <property type="match status" value="1"/>
</dbReference>
<dbReference type="SUPFAM" id="SSF56091">
    <property type="entry name" value="DNA ligase/mRNA capping enzyme, catalytic domain"/>
    <property type="match status" value="1"/>
</dbReference>
<dbReference type="SUPFAM" id="SSF50249">
    <property type="entry name" value="Nucleic acid-binding proteins"/>
    <property type="match status" value="1"/>
</dbReference>
<dbReference type="SUPFAM" id="SSF47781">
    <property type="entry name" value="RuvA domain 2-like"/>
    <property type="match status" value="1"/>
</dbReference>
<dbReference type="PROSITE" id="PS50172">
    <property type="entry name" value="BRCT"/>
    <property type="match status" value="1"/>
</dbReference>
<dbReference type="PROSITE" id="PS01055">
    <property type="entry name" value="DNA_LIGASE_N1"/>
    <property type="match status" value="1"/>
</dbReference>
<dbReference type="PROSITE" id="PS01056">
    <property type="entry name" value="DNA_LIGASE_N2"/>
    <property type="match status" value="1"/>
</dbReference>
<sequence length="704" mass="76450">MQDERPVDQLTEAEAATELARLAEAIEAANTAYHTHDAPQISDADYDALKLRNRAIEEQFPELRRSDSPSDRVGGALAEGFAKVRHEVRMLSLENAFDLAEVEDWIERIRRYLGHVGDLLFTAEPKIDGLSLSLRYEKGRLVQAATRGDGETGENVTENARTIADLPTELDGAPDLLEVRGEVYMSHEDFAALNGRQEAAGQRLFANPRNAAAGSLRQLDPAVTASRPLRFFAYAWGAHSEPLAATQHEAIARLAALGFATNPLTRLCTGPEELLAQHAEIERQRAALGYDIDGVVYKVDDLALQRRLGFRASTPRWAIAHKFAAQLAWTQLEGIDIQVGRTGALSPVARLKPVTVGGVVVANATLHNEDYIAGRDSKGQEIRGGKDIRVGDWVQVYRAGDVIPKVADVDLDRRPEGAARYRFPETCPECGSEAIREPGDSVRRCTGGLICPAQQVERLKHFVSRAAFDIEGLGAKQVEALWRDGWIRQPADIFELPNRYREGIQRLENREGWGRKSAENLFAAIEARRRIALHRLIFALGIRHVGETTATLLATHYGSWAAFEAAMTRAEVGAGPEWQDLLSIDGVGAVLATSLVTAFHQEAERAAVDALAAHLTVEDAEVRAPVASPVAGKIVVFTGTLEKMSRAEAKARAEALGAKVSGSVSARTDVVVAGPGAGSKAKQAAALGIETIDEDGWLRLIGDA</sequence>
<protein>
    <recommendedName>
        <fullName evidence="1">DNA ligase</fullName>
        <ecNumber evidence="1">6.5.1.2</ecNumber>
    </recommendedName>
    <alternativeName>
        <fullName evidence="1">Polydeoxyribonucleotide synthase [NAD(+)]</fullName>
    </alternativeName>
</protein>
<feature type="chain" id="PRO_0000313396" description="DNA ligase">
    <location>
        <begin position="1"/>
        <end position="704"/>
    </location>
</feature>
<feature type="domain" description="BRCT" evidence="1">
    <location>
        <begin position="625"/>
        <end position="704"/>
    </location>
</feature>
<feature type="active site" description="N6-AMP-lysine intermediate" evidence="1">
    <location>
        <position position="126"/>
    </location>
</feature>
<feature type="binding site" evidence="1">
    <location>
        <begin position="43"/>
        <end position="47"/>
    </location>
    <ligand>
        <name>NAD(+)</name>
        <dbReference type="ChEBI" id="CHEBI:57540"/>
    </ligand>
</feature>
<feature type="binding site" evidence="1">
    <location>
        <begin position="92"/>
        <end position="93"/>
    </location>
    <ligand>
        <name>NAD(+)</name>
        <dbReference type="ChEBI" id="CHEBI:57540"/>
    </ligand>
</feature>
<feature type="binding site" evidence="1">
    <location>
        <position position="124"/>
    </location>
    <ligand>
        <name>NAD(+)</name>
        <dbReference type="ChEBI" id="CHEBI:57540"/>
    </ligand>
</feature>
<feature type="binding site" evidence="1">
    <location>
        <position position="147"/>
    </location>
    <ligand>
        <name>NAD(+)</name>
        <dbReference type="ChEBI" id="CHEBI:57540"/>
    </ligand>
</feature>
<feature type="binding site" evidence="1">
    <location>
        <position position="182"/>
    </location>
    <ligand>
        <name>NAD(+)</name>
        <dbReference type="ChEBI" id="CHEBI:57540"/>
    </ligand>
</feature>
<feature type="binding site" evidence="1">
    <location>
        <position position="298"/>
    </location>
    <ligand>
        <name>NAD(+)</name>
        <dbReference type="ChEBI" id="CHEBI:57540"/>
    </ligand>
</feature>
<feature type="binding site" evidence="1">
    <location>
        <position position="322"/>
    </location>
    <ligand>
        <name>NAD(+)</name>
        <dbReference type="ChEBI" id="CHEBI:57540"/>
    </ligand>
</feature>
<feature type="binding site" evidence="1">
    <location>
        <position position="427"/>
    </location>
    <ligand>
        <name>Zn(2+)</name>
        <dbReference type="ChEBI" id="CHEBI:29105"/>
    </ligand>
</feature>
<feature type="binding site" evidence="1">
    <location>
        <position position="430"/>
    </location>
    <ligand>
        <name>Zn(2+)</name>
        <dbReference type="ChEBI" id="CHEBI:29105"/>
    </ligand>
</feature>
<feature type="binding site" evidence="1">
    <location>
        <position position="445"/>
    </location>
    <ligand>
        <name>Zn(2+)</name>
        <dbReference type="ChEBI" id="CHEBI:29105"/>
    </ligand>
</feature>
<feature type="binding site" evidence="1">
    <location>
        <position position="451"/>
    </location>
    <ligand>
        <name>Zn(2+)</name>
        <dbReference type="ChEBI" id="CHEBI:29105"/>
    </ligand>
</feature>
<organism>
    <name type="scientific">Cereibacter sphaeroides (strain ATCC 17029 / ATH 2.4.9)</name>
    <name type="common">Rhodobacter sphaeroides</name>
    <dbReference type="NCBI Taxonomy" id="349101"/>
    <lineage>
        <taxon>Bacteria</taxon>
        <taxon>Pseudomonadati</taxon>
        <taxon>Pseudomonadota</taxon>
        <taxon>Alphaproteobacteria</taxon>
        <taxon>Rhodobacterales</taxon>
        <taxon>Paracoccaceae</taxon>
        <taxon>Cereibacter</taxon>
    </lineage>
</organism>
<evidence type="ECO:0000255" key="1">
    <source>
        <dbReference type="HAMAP-Rule" id="MF_01588"/>
    </source>
</evidence>
<accession>A3PJ74</accession>